<accession>Q12497</accession>
<accession>D6VS56</accession>
<evidence type="ECO:0000255" key="1"/>
<evidence type="ECO:0000256" key="2">
    <source>
        <dbReference type="SAM" id="MobiDB-lite"/>
    </source>
</evidence>
<evidence type="ECO:0000269" key="3">
    <source>
    </source>
</evidence>
<evidence type="ECO:0000269" key="4">
    <source>
    </source>
</evidence>
<evidence type="ECO:0000269" key="5">
    <source>
    </source>
</evidence>
<evidence type="ECO:0000269" key="6">
    <source>
    </source>
</evidence>
<evidence type="ECO:0000269" key="7">
    <source>
    </source>
</evidence>
<reference key="1">
    <citation type="journal article" date="1997" name="Nature">
        <title>The nucleotide sequence of Saccharomyces cerevisiae chromosome IV.</title>
        <authorList>
            <person name="Jacq C."/>
            <person name="Alt-Moerbe J."/>
            <person name="Andre B."/>
            <person name="Arnold W."/>
            <person name="Bahr A."/>
            <person name="Ballesta J.P.G."/>
            <person name="Bargues M."/>
            <person name="Baron L."/>
            <person name="Becker A."/>
            <person name="Biteau N."/>
            <person name="Bloecker H."/>
            <person name="Blugeon C."/>
            <person name="Boskovic J."/>
            <person name="Brandt P."/>
            <person name="Brueckner M."/>
            <person name="Buitrago M.J."/>
            <person name="Coster F."/>
            <person name="Delaveau T."/>
            <person name="del Rey F."/>
            <person name="Dujon B."/>
            <person name="Eide L.G."/>
            <person name="Garcia-Cantalejo J.M."/>
            <person name="Goffeau A."/>
            <person name="Gomez-Peris A."/>
            <person name="Granotier C."/>
            <person name="Hanemann V."/>
            <person name="Hankeln T."/>
            <person name="Hoheisel J.D."/>
            <person name="Jaeger W."/>
            <person name="Jimenez A."/>
            <person name="Jonniaux J.-L."/>
            <person name="Kraemer C."/>
            <person name="Kuester H."/>
            <person name="Laamanen P."/>
            <person name="Legros Y."/>
            <person name="Louis E.J."/>
            <person name="Moeller-Rieker S."/>
            <person name="Monnet A."/>
            <person name="Moro M."/>
            <person name="Mueller-Auer S."/>
            <person name="Nussbaumer B."/>
            <person name="Paricio N."/>
            <person name="Paulin L."/>
            <person name="Perea J."/>
            <person name="Perez-Alonso M."/>
            <person name="Perez-Ortin J.E."/>
            <person name="Pohl T.M."/>
            <person name="Prydz H."/>
            <person name="Purnelle B."/>
            <person name="Rasmussen S.W."/>
            <person name="Remacha M.A."/>
            <person name="Revuelta J.L."/>
            <person name="Rieger M."/>
            <person name="Salom D."/>
            <person name="Saluz H.P."/>
            <person name="Saiz J.E."/>
            <person name="Saren A.-M."/>
            <person name="Schaefer M."/>
            <person name="Scharfe M."/>
            <person name="Schmidt E.R."/>
            <person name="Schneider C."/>
            <person name="Scholler P."/>
            <person name="Schwarz S."/>
            <person name="Soler-Mira A."/>
            <person name="Urrestarazu L.A."/>
            <person name="Verhasselt P."/>
            <person name="Vissers S."/>
            <person name="Voet M."/>
            <person name="Volckaert G."/>
            <person name="Wagner G."/>
            <person name="Wambutt R."/>
            <person name="Wedler E."/>
            <person name="Wedler H."/>
            <person name="Woelfl S."/>
            <person name="Harris D.E."/>
            <person name="Bowman S."/>
            <person name="Brown D."/>
            <person name="Churcher C.M."/>
            <person name="Connor R."/>
            <person name="Dedman K."/>
            <person name="Gentles S."/>
            <person name="Hamlin N."/>
            <person name="Hunt S."/>
            <person name="Jones L."/>
            <person name="McDonald S."/>
            <person name="Murphy L.D."/>
            <person name="Niblett D."/>
            <person name="Odell C."/>
            <person name="Oliver K."/>
            <person name="Rajandream M.A."/>
            <person name="Richards C."/>
            <person name="Shore L."/>
            <person name="Walsh S.V."/>
            <person name="Barrell B.G."/>
            <person name="Dietrich F.S."/>
            <person name="Mulligan J.T."/>
            <person name="Allen E."/>
            <person name="Araujo R."/>
            <person name="Aviles E."/>
            <person name="Berno A."/>
            <person name="Carpenter J."/>
            <person name="Chen E."/>
            <person name="Cherry J.M."/>
            <person name="Chung E."/>
            <person name="Duncan M."/>
            <person name="Hunicke-Smith S."/>
            <person name="Hyman R.W."/>
            <person name="Komp C."/>
            <person name="Lashkari D."/>
            <person name="Lew H."/>
            <person name="Lin D."/>
            <person name="Mosedale D."/>
            <person name="Nakahara K."/>
            <person name="Namath A."/>
            <person name="Oefner P."/>
            <person name="Oh C."/>
            <person name="Petel F.X."/>
            <person name="Roberts D."/>
            <person name="Schramm S."/>
            <person name="Schroeder M."/>
            <person name="Shogren T."/>
            <person name="Shroff N."/>
            <person name="Winant A."/>
            <person name="Yelton M.A."/>
            <person name="Botstein D."/>
            <person name="Davis R.W."/>
            <person name="Johnston M."/>
            <person name="Andrews S."/>
            <person name="Brinkman R."/>
            <person name="Cooper J."/>
            <person name="Ding H."/>
            <person name="Du Z."/>
            <person name="Favello A."/>
            <person name="Fulton L."/>
            <person name="Gattung S."/>
            <person name="Greco T."/>
            <person name="Hallsworth K."/>
            <person name="Hawkins J."/>
            <person name="Hillier L.W."/>
            <person name="Jier M."/>
            <person name="Johnson D."/>
            <person name="Johnston L."/>
            <person name="Kirsten J."/>
            <person name="Kucaba T."/>
            <person name="Langston Y."/>
            <person name="Latreille P."/>
            <person name="Le T."/>
            <person name="Mardis E."/>
            <person name="Menezes S."/>
            <person name="Miller N."/>
            <person name="Nhan M."/>
            <person name="Pauley A."/>
            <person name="Peluso D."/>
            <person name="Rifkin L."/>
            <person name="Riles L."/>
            <person name="Taich A."/>
            <person name="Trevaskis E."/>
            <person name="Vignati D."/>
            <person name="Wilcox L."/>
            <person name="Wohldman P."/>
            <person name="Vaudin M."/>
            <person name="Wilson R."/>
            <person name="Waterston R."/>
            <person name="Albermann K."/>
            <person name="Hani J."/>
            <person name="Heumann K."/>
            <person name="Kleine K."/>
            <person name="Mewes H.-W."/>
            <person name="Zollner A."/>
            <person name="Zaccaria P."/>
        </authorList>
    </citation>
    <scope>NUCLEOTIDE SEQUENCE [LARGE SCALE GENOMIC DNA]</scope>
    <source>
        <strain>ATCC 204508 / S288c</strain>
    </source>
</reference>
<reference key="2">
    <citation type="journal article" date="2014" name="G3 (Bethesda)">
        <title>The reference genome sequence of Saccharomyces cerevisiae: Then and now.</title>
        <authorList>
            <person name="Engel S.R."/>
            <person name="Dietrich F.S."/>
            <person name="Fisk D.G."/>
            <person name="Binkley G."/>
            <person name="Balakrishnan R."/>
            <person name="Costanzo M.C."/>
            <person name="Dwight S.S."/>
            <person name="Hitz B.C."/>
            <person name="Karra K."/>
            <person name="Nash R.S."/>
            <person name="Weng S."/>
            <person name="Wong E.D."/>
            <person name="Lloyd P."/>
            <person name="Skrzypek M.S."/>
            <person name="Miyasato S.R."/>
            <person name="Simison M."/>
            <person name="Cherry J.M."/>
        </authorList>
    </citation>
    <scope>GENOME REANNOTATION</scope>
    <source>
        <strain>ATCC 204508 / S288c</strain>
    </source>
</reference>
<reference key="3">
    <citation type="journal article" date="2007" name="Genome Res.">
        <title>Approaching a complete repository of sequence-verified protein-encoding clones for Saccharomyces cerevisiae.</title>
        <authorList>
            <person name="Hu Y."/>
            <person name="Rolfs A."/>
            <person name="Bhullar B."/>
            <person name="Murthy T.V.S."/>
            <person name="Zhu C."/>
            <person name="Berger M.F."/>
            <person name="Camargo A.A."/>
            <person name="Kelley F."/>
            <person name="McCarron S."/>
            <person name="Jepson D."/>
            <person name="Richardson A."/>
            <person name="Raphael J."/>
            <person name="Moreira D."/>
            <person name="Taycher E."/>
            <person name="Zuo D."/>
            <person name="Mohr S."/>
            <person name="Kane M.F."/>
            <person name="Williamson J."/>
            <person name="Simpson A.J.G."/>
            <person name="Bulyk M.L."/>
            <person name="Harlow E."/>
            <person name="Marsischky G."/>
            <person name="Kolodner R.D."/>
            <person name="LaBaer J."/>
        </authorList>
    </citation>
    <scope>NUCLEOTIDE SEQUENCE [GENOMIC DNA]</scope>
    <source>
        <strain>ATCC 204508 / S288c</strain>
    </source>
</reference>
<reference key="4">
    <citation type="journal article" date="1999" name="J. Bacteriol.">
        <title>Genome-wide transcriptional analysis of aerobic and anaerobic chemostat cultures of Saccharomyces cerevisiae.</title>
        <authorList>
            <person name="ter Linde J.J.M."/>
            <person name="Liang H."/>
            <person name="Davis R.W."/>
            <person name="Steensma H.Y."/>
            <person name="van Dijken J.P."/>
            <person name="Pronk J.T."/>
        </authorList>
    </citation>
    <scope>INDUCTION</scope>
</reference>
<reference key="5">
    <citation type="journal article" date="2003" name="J. Biochem.">
        <title>Response of genes associated with mitochondrial function to mild heat stress in yeast Saccharomyces cerevisiae.</title>
        <authorList>
            <person name="Sakaki K."/>
            <person name="Tashiro K."/>
            <person name="Kuhara S."/>
            <person name="Mihara K."/>
        </authorList>
    </citation>
    <scope>INDUCTION</scope>
</reference>
<reference key="6">
    <citation type="journal article" date="2003" name="Nature">
        <title>Global analysis of protein localization in budding yeast.</title>
        <authorList>
            <person name="Huh W.-K."/>
            <person name="Falvo J.V."/>
            <person name="Gerke L.C."/>
            <person name="Carroll A.S."/>
            <person name="Howson R.W."/>
            <person name="Weissman J.S."/>
            <person name="O'Shea E.K."/>
        </authorList>
    </citation>
    <scope>SUBCELLULAR LOCATION [LARGE SCALE ANALYSIS]</scope>
</reference>
<reference key="7">
    <citation type="journal article" date="2003" name="Nature">
        <title>Global analysis of protein expression in yeast.</title>
        <authorList>
            <person name="Ghaemmaghami S."/>
            <person name="Huh W.-K."/>
            <person name="Bower K."/>
            <person name="Howson R.W."/>
            <person name="Belle A."/>
            <person name="Dephoure N."/>
            <person name="O'Shea E.K."/>
            <person name="Weissman J.S."/>
        </authorList>
    </citation>
    <scope>LEVEL OF PROTEIN EXPRESSION [LARGE SCALE ANALYSIS]</scope>
</reference>
<reference key="8">
    <citation type="journal article" date="2003" name="Proc. Natl. Acad. Sci. U.S.A.">
        <title>The proteome of Saccharomyces cerevisiae mitochondria.</title>
        <authorList>
            <person name="Sickmann A."/>
            <person name="Reinders J."/>
            <person name="Wagner Y."/>
            <person name="Joppich C."/>
            <person name="Zahedi R.P."/>
            <person name="Meyer H.E."/>
            <person name="Schoenfisch B."/>
            <person name="Perschil I."/>
            <person name="Chacinska A."/>
            <person name="Guiard B."/>
            <person name="Rehling P."/>
            <person name="Pfanner N."/>
            <person name="Meisinger C."/>
        </authorList>
    </citation>
    <scope>SUBCELLULAR LOCATION [LARGE SCALE ANALYSIS]</scope>
    <source>
        <strain>ATCC 76625 / YPH499</strain>
    </source>
</reference>
<organism>
    <name type="scientific">Saccharomyces cerevisiae (strain ATCC 204508 / S288c)</name>
    <name type="common">Baker's yeast</name>
    <dbReference type="NCBI Taxonomy" id="559292"/>
    <lineage>
        <taxon>Eukaryota</taxon>
        <taxon>Fungi</taxon>
        <taxon>Dikarya</taxon>
        <taxon>Ascomycota</taxon>
        <taxon>Saccharomycotina</taxon>
        <taxon>Saccharomycetes</taxon>
        <taxon>Saccharomycetales</taxon>
        <taxon>Saccharomycetaceae</taxon>
        <taxon>Saccharomyces</taxon>
    </lineage>
</organism>
<feature type="transit peptide" description="Mitochondrion" evidence="1">
    <location>
        <begin position="1"/>
        <end position="25"/>
    </location>
</feature>
<feature type="chain" id="PRO_0000244462" description="Protein FMP16, mitochondrial">
    <location>
        <begin position="26"/>
        <end position="93"/>
    </location>
</feature>
<feature type="region of interest" description="Disordered" evidence="2">
    <location>
        <begin position="30"/>
        <end position="93"/>
    </location>
</feature>
<feature type="compositionally biased region" description="Basic and acidic residues" evidence="2">
    <location>
        <begin position="35"/>
        <end position="93"/>
    </location>
</feature>
<protein>
    <recommendedName>
        <fullName>Protein FMP16, mitochondrial</fullName>
    </recommendedName>
    <alternativeName>
        <fullName>Found in mitochondrial proteome protein 16</fullName>
    </alternativeName>
</protein>
<sequence length="93" mass="10845">MLRTTFLRTPRQLMRKSPRASFSIVTRAAFPHLKNNQDEAEKKEQGLFDSNKKRLDTLEHGKNPDYKQPGMEDLKKKGDDARIEQNRPDDGVY</sequence>
<gene>
    <name type="primary">FMP16</name>
    <name type="ordered locus">YDR070C</name>
</gene>
<dbReference type="EMBL" id="Z46796">
    <property type="protein sequence ID" value="CAA86792.1"/>
    <property type="molecule type" value="Genomic_DNA"/>
</dbReference>
<dbReference type="EMBL" id="Z49209">
    <property type="protein sequence ID" value="CAA89099.1"/>
    <property type="molecule type" value="Genomic_DNA"/>
</dbReference>
<dbReference type="EMBL" id="Z74366">
    <property type="protein sequence ID" value="CAA98888.1"/>
    <property type="molecule type" value="Genomic_DNA"/>
</dbReference>
<dbReference type="EMBL" id="AY557660">
    <property type="protein sequence ID" value="AAS55986.1"/>
    <property type="molecule type" value="Genomic_DNA"/>
</dbReference>
<dbReference type="EMBL" id="BK006938">
    <property type="protein sequence ID" value="DAA11916.1"/>
    <property type="molecule type" value="Genomic_DNA"/>
</dbReference>
<dbReference type="PIR" id="S49825">
    <property type="entry name" value="S49825"/>
</dbReference>
<dbReference type="RefSeq" id="NP_010355.1">
    <property type="nucleotide sequence ID" value="NM_001180378.1"/>
</dbReference>
<dbReference type="SMR" id="Q12497"/>
<dbReference type="BioGRID" id="32125">
    <property type="interactions" value="51"/>
</dbReference>
<dbReference type="DIP" id="DIP-1821N"/>
<dbReference type="FunCoup" id="Q12497">
    <property type="interactions" value="130"/>
</dbReference>
<dbReference type="IntAct" id="Q12497">
    <property type="interactions" value="2"/>
</dbReference>
<dbReference type="MINT" id="Q12497"/>
<dbReference type="STRING" id="4932.YDR070C"/>
<dbReference type="PaxDb" id="4932-YDR070C"/>
<dbReference type="PeptideAtlas" id="Q12497"/>
<dbReference type="EnsemblFungi" id="YDR070C_mRNA">
    <property type="protein sequence ID" value="YDR070C"/>
    <property type="gene ID" value="YDR070C"/>
</dbReference>
<dbReference type="GeneID" id="851642"/>
<dbReference type="KEGG" id="sce:YDR070C"/>
<dbReference type="AGR" id="SGD:S000002477"/>
<dbReference type="SGD" id="S000002477">
    <property type="gene designation" value="FMP16"/>
</dbReference>
<dbReference type="VEuPathDB" id="FungiDB:YDR070C"/>
<dbReference type="eggNOG" id="ENOG502SEPE">
    <property type="taxonomic scope" value="Eukaryota"/>
</dbReference>
<dbReference type="HOGENOM" id="CLU_180256_0_0_1"/>
<dbReference type="InParanoid" id="Q12497"/>
<dbReference type="OMA" id="YTHQRSE"/>
<dbReference type="OrthoDB" id="4034641at2759"/>
<dbReference type="BioCyc" id="YEAST:G3O-29677-MONOMER"/>
<dbReference type="BioGRID-ORCS" id="851642">
    <property type="hits" value="7 hits in 10 CRISPR screens"/>
</dbReference>
<dbReference type="PRO" id="PR:Q12497"/>
<dbReference type="Proteomes" id="UP000002311">
    <property type="component" value="Chromosome IV"/>
</dbReference>
<dbReference type="RNAct" id="Q12497">
    <property type="molecule type" value="protein"/>
</dbReference>
<dbReference type="GO" id="GO:0005739">
    <property type="term" value="C:mitochondrion"/>
    <property type="evidence" value="ECO:0007005"/>
    <property type="project" value="SGD"/>
</dbReference>
<name>FMP16_YEAST</name>
<proteinExistence type="evidence at protein level"/>
<comment type="subcellular location">
    <subcellularLocation>
        <location evidence="5 7">Mitochondrion</location>
    </subcellularLocation>
</comment>
<comment type="induction">
    <text evidence="3 4">Induced under aerobic conditions and by mild heat stress.</text>
</comment>
<comment type="miscellaneous">
    <text evidence="6">Present with 937 molecules/cell in log phase SD medium.</text>
</comment>
<keyword id="KW-0496">Mitochondrion</keyword>
<keyword id="KW-1185">Reference proteome</keyword>
<keyword id="KW-0809">Transit peptide</keyword>